<feature type="chain" id="PRO_0000265907" description="ATP synthase epsilon chain">
    <location>
        <begin position="1"/>
        <end position="148"/>
    </location>
</feature>
<organism>
    <name type="scientific">Streptococcus thermophilus (strain ATCC BAA-250 / LMG 18311)</name>
    <dbReference type="NCBI Taxonomy" id="264199"/>
    <lineage>
        <taxon>Bacteria</taxon>
        <taxon>Bacillati</taxon>
        <taxon>Bacillota</taxon>
        <taxon>Bacilli</taxon>
        <taxon>Lactobacillales</taxon>
        <taxon>Streptococcaceae</taxon>
        <taxon>Streptococcus</taxon>
    </lineage>
</organism>
<reference key="1">
    <citation type="journal article" date="2004" name="Nat. Biotechnol.">
        <title>Complete sequence and comparative genome analysis of the dairy bacterium Streptococcus thermophilus.</title>
        <authorList>
            <person name="Bolotin A."/>
            <person name="Quinquis B."/>
            <person name="Renault P."/>
            <person name="Sorokin A."/>
            <person name="Ehrlich S.D."/>
            <person name="Kulakauskas S."/>
            <person name="Lapidus A."/>
            <person name="Goltsman E."/>
            <person name="Mazur M."/>
            <person name="Pusch G.D."/>
            <person name="Fonstein M."/>
            <person name="Overbeek R."/>
            <person name="Kyprides N."/>
            <person name="Purnelle B."/>
            <person name="Prozzi D."/>
            <person name="Ngui K."/>
            <person name="Masuy D."/>
            <person name="Hancy F."/>
            <person name="Burteau S."/>
            <person name="Boutry M."/>
            <person name="Delcour J."/>
            <person name="Goffeau A."/>
            <person name="Hols P."/>
        </authorList>
    </citation>
    <scope>NUCLEOTIDE SEQUENCE [LARGE SCALE GENOMIC DNA]</scope>
    <source>
        <strain>ATCC BAA-250 / LMG 18311</strain>
    </source>
</reference>
<dbReference type="EMBL" id="CP000023">
    <property type="protein sequence ID" value="AAV60195.1"/>
    <property type="molecule type" value="Genomic_DNA"/>
</dbReference>
<dbReference type="RefSeq" id="WP_011225598.1">
    <property type="nucleotide sequence ID" value="NC_006448.1"/>
</dbReference>
<dbReference type="SMR" id="Q5M5J0"/>
<dbReference type="STRING" id="264199.stu0485"/>
<dbReference type="KEGG" id="stl:stu0485"/>
<dbReference type="PATRIC" id="fig|264199.4.peg.488"/>
<dbReference type="eggNOG" id="COG0355">
    <property type="taxonomic scope" value="Bacteria"/>
</dbReference>
<dbReference type="HOGENOM" id="CLU_084338_1_0_9"/>
<dbReference type="Proteomes" id="UP000001170">
    <property type="component" value="Chromosome"/>
</dbReference>
<dbReference type="GO" id="GO:0005886">
    <property type="term" value="C:plasma membrane"/>
    <property type="evidence" value="ECO:0007669"/>
    <property type="project" value="UniProtKB-SubCell"/>
</dbReference>
<dbReference type="GO" id="GO:0045259">
    <property type="term" value="C:proton-transporting ATP synthase complex"/>
    <property type="evidence" value="ECO:0007669"/>
    <property type="project" value="UniProtKB-KW"/>
</dbReference>
<dbReference type="GO" id="GO:0005524">
    <property type="term" value="F:ATP binding"/>
    <property type="evidence" value="ECO:0007669"/>
    <property type="project" value="UniProtKB-UniRule"/>
</dbReference>
<dbReference type="GO" id="GO:0046933">
    <property type="term" value="F:proton-transporting ATP synthase activity, rotational mechanism"/>
    <property type="evidence" value="ECO:0007669"/>
    <property type="project" value="UniProtKB-UniRule"/>
</dbReference>
<dbReference type="CDD" id="cd12152">
    <property type="entry name" value="F1-ATPase_delta"/>
    <property type="match status" value="1"/>
</dbReference>
<dbReference type="Gene3D" id="1.20.5.440">
    <property type="entry name" value="ATP synthase delta/epsilon subunit, C-terminal domain"/>
    <property type="match status" value="1"/>
</dbReference>
<dbReference type="Gene3D" id="2.60.15.10">
    <property type="entry name" value="F0F1 ATP synthase delta/epsilon subunit, N-terminal"/>
    <property type="match status" value="1"/>
</dbReference>
<dbReference type="HAMAP" id="MF_00530">
    <property type="entry name" value="ATP_synth_epsil_bac"/>
    <property type="match status" value="1"/>
</dbReference>
<dbReference type="InterPro" id="IPR001469">
    <property type="entry name" value="ATP_synth_F1_dsu/esu"/>
</dbReference>
<dbReference type="InterPro" id="IPR020546">
    <property type="entry name" value="ATP_synth_F1_dsu/esu_N"/>
</dbReference>
<dbReference type="InterPro" id="IPR020547">
    <property type="entry name" value="ATP_synth_F1_esu_C"/>
</dbReference>
<dbReference type="InterPro" id="IPR036771">
    <property type="entry name" value="ATPsynth_dsu/esu_N"/>
</dbReference>
<dbReference type="NCBIfam" id="TIGR01216">
    <property type="entry name" value="ATP_synt_epsi"/>
    <property type="match status" value="1"/>
</dbReference>
<dbReference type="NCBIfam" id="NF001846">
    <property type="entry name" value="PRK00571.1-3"/>
    <property type="match status" value="1"/>
</dbReference>
<dbReference type="PANTHER" id="PTHR13822">
    <property type="entry name" value="ATP SYNTHASE DELTA/EPSILON CHAIN"/>
    <property type="match status" value="1"/>
</dbReference>
<dbReference type="PANTHER" id="PTHR13822:SF10">
    <property type="entry name" value="ATP SYNTHASE EPSILON CHAIN, CHLOROPLASTIC"/>
    <property type="match status" value="1"/>
</dbReference>
<dbReference type="Pfam" id="PF00401">
    <property type="entry name" value="ATP-synt_DE"/>
    <property type="match status" value="1"/>
</dbReference>
<dbReference type="Pfam" id="PF02823">
    <property type="entry name" value="ATP-synt_DE_N"/>
    <property type="match status" value="1"/>
</dbReference>
<dbReference type="SUPFAM" id="SSF51344">
    <property type="entry name" value="Epsilon subunit of F1F0-ATP synthase N-terminal domain"/>
    <property type="match status" value="1"/>
</dbReference>
<keyword id="KW-0066">ATP synthesis</keyword>
<keyword id="KW-1003">Cell membrane</keyword>
<keyword id="KW-0139">CF(1)</keyword>
<keyword id="KW-0375">Hydrogen ion transport</keyword>
<keyword id="KW-0406">Ion transport</keyword>
<keyword id="KW-0472">Membrane</keyword>
<keyword id="KW-1185">Reference proteome</keyword>
<keyword id="KW-0813">Transport</keyword>
<proteinExistence type="inferred from homology"/>
<name>ATPE_STRT2</name>
<evidence type="ECO:0000255" key="1">
    <source>
        <dbReference type="HAMAP-Rule" id="MF_00530"/>
    </source>
</evidence>
<sequence>MAQMTVQVVTPDGLKYDHHASFIHAVTKDGQIGILPGHINLIAPLEVDELKVRRVDDESHVDWIAVNGGIIEVKDDFITIIANSAERDRDIDVSRAERAKQRAERVLEEETKRVLEKATKSDRNDDVQRAQIALRRALNRINVGTKIR</sequence>
<accession>Q5M5J0</accession>
<comment type="function">
    <text evidence="1">Produces ATP from ADP in the presence of a proton gradient across the membrane.</text>
</comment>
<comment type="subunit">
    <text>F-type ATPases have 2 components, CF(1) - the catalytic core - and CF(0) - the membrane proton channel. CF(1) has five subunits: alpha(3), beta(3), gamma(1), delta(1), epsilon(1). CF(0) has three main subunits: a, b and c.</text>
</comment>
<comment type="subcellular location">
    <subcellularLocation>
        <location evidence="1">Cell membrane</location>
        <topology evidence="1">Peripheral membrane protein</topology>
    </subcellularLocation>
</comment>
<comment type="similarity">
    <text evidence="1">Belongs to the ATPase epsilon chain family.</text>
</comment>
<gene>
    <name evidence="1" type="primary">atpC</name>
    <name type="ordered locus">stu0485</name>
</gene>
<protein>
    <recommendedName>
        <fullName evidence="1">ATP synthase epsilon chain</fullName>
    </recommendedName>
    <alternativeName>
        <fullName evidence="1">ATP synthase F1 sector epsilon subunit</fullName>
    </alternativeName>
    <alternativeName>
        <fullName evidence="1">F-ATPase epsilon subunit</fullName>
    </alternativeName>
</protein>